<accession>Q0MQI8</accession>
<comment type="function">
    <text evidence="2">Core subunit of the mitochondrial membrane respiratory chain NADH dehydrogenase (Complex I) which catalyzes electron transfer from NADH through the respiratory chain, using ubiquinone as an electron acceptor. Parts of the peripheral arm of the enzyme, where the electrons from NADH are accepted by flavin mononucleotide (FMN) and then passed along a chain of iron-sulfur clusters by electron tunnelling to the final acceptor ubiquinone. Contains one iron-sulfur cluster.</text>
</comment>
<comment type="catalytic activity">
    <reaction evidence="2">
        <text>a ubiquinone + NADH + 5 H(+)(in) = a ubiquinol + NAD(+) + 4 H(+)(out)</text>
        <dbReference type="Rhea" id="RHEA:29091"/>
        <dbReference type="Rhea" id="RHEA-COMP:9565"/>
        <dbReference type="Rhea" id="RHEA-COMP:9566"/>
        <dbReference type="ChEBI" id="CHEBI:15378"/>
        <dbReference type="ChEBI" id="CHEBI:16389"/>
        <dbReference type="ChEBI" id="CHEBI:17976"/>
        <dbReference type="ChEBI" id="CHEBI:57540"/>
        <dbReference type="ChEBI" id="CHEBI:57945"/>
        <dbReference type="EC" id="7.1.1.2"/>
    </reaction>
    <physiologicalReaction direction="left-to-right" evidence="2">
        <dbReference type="Rhea" id="RHEA:29092"/>
    </physiologicalReaction>
</comment>
<comment type="cofactor">
    <cofactor evidence="2">
        <name>[2Fe-2S] cluster</name>
        <dbReference type="ChEBI" id="CHEBI:190135"/>
    </cofactor>
    <text evidence="2">Binds 1 [2Fe-2S] cluster.</text>
</comment>
<comment type="subunit">
    <text evidence="1">Core subunit of respiratory chain NADH dehydrogenase (Complex I) which is composed of 45 different subunits. This is a component of the flavoprotein-sulfur (FP) fragment of the enzyme (By similarity).</text>
</comment>
<comment type="subcellular location">
    <subcellularLocation>
        <location evidence="1">Mitochondrion inner membrane</location>
        <topology evidence="1">Peripheral membrane protein</topology>
        <orientation evidence="1">Matrix side</orientation>
    </subcellularLocation>
</comment>
<comment type="similarity">
    <text evidence="6">Belongs to the complex I 24 kDa subunit family.</text>
</comment>
<sequence>MFFSAALRARAAGLTAQWGRHVRNLHKTAMQNGAGGALFVHRDTPENNPDTPFDFTPENYKRIEAIVKNYPEGHKAAAVLPVLDLAQRQNGWLPISAMNKVAEVLQVPPMRVYEVATFYTMYNRKPVGKYHIQVCTTTPCMLRNSDSILEAIQKKLGIKVGETTPDKLFTLIEVECLGACVNAPMVQINDNYYEDLTAKDIEEIIDELKAGKIPKPGPRSGRFSCEPAGGLTSLTEPPKGPGFGVQAGL</sequence>
<dbReference type="EC" id="7.1.1.2" evidence="2"/>
<dbReference type="EMBL" id="DQ885646">
    <property type="protein sequence ID" value="ABH12155.1"/>
    <property type="molecule type" value="mRNA"/>
</dbReference>
<dbReference type="RefSeq" id="NP_001266570.1">
    <property type="nucleotide sequence ID" value="NM_001279641.1"/>
</dbReference>
<dbReference type="SMR" id="Q0MQI8"/>
<dbReference type="FunCoup" id="Q0MQI8">
    <property type="interactions" value="1626"/>
</dbReference>
<dbReference type="STRING" id="9593.ENSGGOP00000022602"/>
<dbReference type="GeneID" id="101146734"/>
<dbReference type="KEGG" id="ggo:101146734"/>
<dbReference type="CTD" id="4729"/>
<dbReference type="eggNOG" id="KOG3196">
    <property type="taxonomic scope" value="Eukaryota"/>
</dbReference>
<dbReference type="InParanoid" id="Q0MQI8"/>
<dbReference type="OrthoDB" id="3826at9604"/>
<dbReference type="Proteomes" id="UP000001519">
    <property type="component" value="Unplaced"/>
</dbReference>
<dbReference type="GO" id="GO:0005743">
    <property type="term" value="C:mitochondrial inner membrane"/>
    <property type="evidence" value="ECO:0000250"/>
    <property type="project" value="UniProtKB"/>
</dbReference>
<dbReference type="GO" id="GO:0045271">
    <property type="term" value="C:respiratory chain complex I"/>
    <property type="evidence" value="ECO:0000250"/>
    <property type="project" value="UniProtKB"/>
</dbReference>
<dbReference type="GO" id="GO:0051537">
    <property type="term" value="F:2 iron, 2 sulfur cluster binding"/>
    <property type="evidence" value="ECO:0007669"/>
    <property type="project" value="UniProtKB-KW"/>
</dbReference>
<dbReference type="GO" id="GO:0046872">
    <property type="term" value="F:metal ion binding"/>
    <property type="evidence" value="ECO:0007669"/>
    <property type="project" value="UniProtKB-KW"/>
</dbReference>
<dbReference type="GO" id="GO:0008137">
    <property type="term" value="F:NADH dehydrogenase (ubiquinone) activity"/>
    <property type="evidence" value="ECO:0000250"/>
    <property type="project" value="UniProtKB"/>
</dbReference>
<dbReference type="GO" id="GO:0006120">
    <property type="term" value="P:mitochondrial electron transport, NADH to ubiquinone"/>
    <property type="evidence" value="ECO:0000250"/>
    <property type="project" value="UniProtKB"/>
</dbReference>
<dbReference type="CDD" id="cd03064">
    <property type="entry name" value="TRX_Fd_NuoE"/>
    <property type="match status" value="1"/>
</dbReference>
<dbReference type="FunFam" id="3.40.30.10:FF:000022">
    <property type="entry name" value="NADH dehydrogenase flavoprotein 2, mitochondrial"/>
    <property type="match status" value="1"/>
</dbReference>
<dbReference type="FunFam" id="1.10.10.1590:FF:000001">
    <property type="entry name" value="NADH-quinone oxidoreductase subunit E"/>
    <property type="match status" value="1"/>
</dbReference>
<dbReference type="Gene3D" id="3.40.30.10">
    <property type="entry name" value="Glutaredoxin"/>
    <property type="match status" value="1"/>
</dbReference>
<dbReference type="Gene3D" id="1.10.10.1590">
    <property type="entry name" value="NADH-quinone oxidoreductase subunit E"/>
    <property type="match status" value="1"/>
</dbReference>
<dbReference type="InterPro" id="IPR002023">
    <property type="entry name" value="NuoE-like"/>
</dbReference>
<dbReference type="InterPro" id="IPR042128">
    <property type="entry name" value="NuoE_dom"/>
</dbReference>
<dbReference type="InterPro" id="IPR041921">
    <property type="entry name" value="NuoE_N"/>
</dbReference>
<dbReference type="InterPro" id="IPR036249">
    <property type="entry name" value="Thioredoxin-like_sf"/>
</dbReference>
<dbReference type="NCBIfam" id="TIGR01958">
    <property type="entry name" value="nuoE_fam"/>
    <property type="match status" value="1"/>
</dbReference>
<dbReference type="NCBIfam" id="NF005722">
    <property type="entry name" value="PRK07539.1-2"/>
    <property type="match status" value="1"/>
</dbReference>
<dbReference type="NCBIfam" id="NF005725">
    <property type="entry name" value="PRK07539.1-5"/>
    <property type="match status" value="1"/>
</dbReference>
<dbReference type="PANTHER" id="PTHR10371:SF3">
    <property type="entry name" value="NADH DEHYDROGENASE [UBIQUINONE] FLAVOPROTEIN 2, MITOCHONDRIAL"/>
    <property type="match status" value="1"/>
</dbReference>
<dbReference type="PANTHER" id="PTHR10371">
    <property type="entry name" value="NADH DEHYDROGENASE UBIQUINONE FLAVOPROTEIN 2, MITOCHONDRIAL"/>
    <property type="match status" value="1"/>
</dbReference>
<dbReference type="Pfam" id="PF01257">
    <property type="entry name" value="2Fe-2S_thioredx"/>
    <property type="match status" value="1"/>
</dbReference>
<dbReference type="PIRSF" id="PIRSF000216">
    <property type="entry name" value="NADH_DH_24kDa"/>
    <property type="match status" value="1"/>
</dbReference>
<dbReference type="SUPFAM" id="SSF52833">
    <property type="entry name" value="Thioredoxin-like"/>
    <property type="match status" value="1"/>
</dbReference>
<dbReference type="PROSITE" id="PS01099">
    <property type="entry name" value="COMPLEX1_24K"/>
    <property type="match status" value="1"/>
</dbReference>
<organism>
    <name type="scientific">Gorilla gorilla gorilla</name>
    <name type="common">Western lowland gorilla</name>
    <dbReference type="NCBI Taxonomy" id="9595"/>
    <lineage>
        <taxon>Eukaryota</taxon>
        <taxon>Metazoa</taxon>
        <taxon>Chordata</taxon>
        <taxon>Craniata</taxon>
        <taxon>Vertebrata</taxon>
        <taxon>Euteleostomi</taxon>
        <taxon>Mammalia</taxon>
        <taxon>Eutheria</taxon>
        <taxon>Euarchontoglires</taxon>
        <taxon>Primates</taxon>
        <taxon>Haplorrhini</taxon>
        <taxon>Catarrhini</taxon>
        <taxon>Hominidae</taxon>
        <taxon>Gorilla</taxon>
    </lineage>
</organism>
<proteinExistence type="evidence at transcript level"/>
<name>NDUV2_GORGO</name>
<reference key="1">
    <citation type="journal article" date="2006" name="Gene">
        <title>Adaptive selection of mitochondrial complex I subunits during primate radiation.</title>
        <authorList>
            <person name="Mishmar D."/>
            <person name="Ruiz-Pesini E."/>
            <person name="Mondragon-Palomino M."/>
            <person name="Procaccio V."/>
            <person name="Gaut B."/>
            <person name="Wallace D.C."/>
        </authorList>
    </citation>
    <scope>NUCLEOTIDE SEQUENCE [MRNA]</scope>
</reference>
<feature type="transit peptide" description="Mitochondrion" evidence="4">
    <location>
        <begin position="1"/>
        <end position="32"/>
    </location>
</feature>
<feature type="chain" id="PRO_0000251879" description="NADH dehydrogenase [ubiquinone] flavoprotein 2, mitochondrial">
    <location>
        <begin position="33"/>
        <end position="249"/>
    </location>
</feature>
<feature type="region of interest" description="Disordered" evidence="5">
    <location>
        <begin position="213"/>
        <end position="249"/>
    </location>
</feature>
<feature type="binding site" evidence="1">
    <location>
        <position position="135"/>
    </location>
    <ligand>
        <name>[2Fe-2S] cluster</name>
        <dbReference type="ChEBI" id="CHEBI:190135"/>
    </ligand>
</feature>
<feature type="binding site" evidence="1">
    <location>
        <position position="140"/>
    </location>
    <ligand>
        <name>[2Fe-2S] cluster</name>
        <dbReference type="ChEBI" id="CHEBI:190135"/>
    </ligand>
</feature>
<feature type="binding site" evidence="2">
    <location>
        <position position="176"/>
    </location>
    <ligand>
        <name>[2Fe-2S] cluster</name>
        <dbReference type="ChEBI" id="CHEBI:190135"/>
    </ligand>
</feature>
<feature type="binding site" evidence="2">
    <location>
        <position position="180"/>
    </location>
    <ligand>
        <name>[2Fe-2S] cluster</name>
        <dbReference type="ChEBI" id="CHEBI:190135"/>
    </ligand>
</feature>
<feature type="modified residue" description="N6-acetyllysine" evidence="3">
    <location>
        <position position="61"/>
    </location>
</feature>
<feature type="modified residue" description="Phosphotyrosine; by SRC" evidence="2">
    <location>
        <position position="193"/>
    </location>
</feature>
<gene>
    <name evidence="2" type="primary">NDUFV2</name>
</gene>
<keyword id="KW-0001">2Fe-2S</keyword>
<keyword id="KW-0007">Acetylation</keyword>
<keyword id="KW-0249">Electron transport</keyword>
<keyword id="KW-0408">Iron</keyword>
<keyword id="KW-0411">Iron-sulfur</keyword>
<keyword id="KW-0472">Membrane</keyword>
<keyword id="KW-0479">Metal-binding</keyword>
<keyword id="KW-0496">Mitochondrion</keyword>
<keyword id="KW-0999">Mitochondrion inner membrane</keyword>
<keyword id="KW-0520">NAD</keyword>
<keyword id="KW-0560">Oxidoreductase</keyword>
<keyword id="KW-0597">Phosphoprotein</keyword>
<keyword id="KW-1185">Reference proteome</keyword>
<keyword id="KW-0679">Respiratory chain</keyword>
<keyword id="KW-0809">Transit peptide</keyword>
<keyword id="KW-1278">Translocase</keyword>
<keyword id="KW-0813">Transport</keyword>
<keyword id="KW-0830">Ubiquinone</keyword>
<protein>
    <recommendedName>
        <fullName evidence="2">NADH dehydrogenase [ubiquinone] flavoprotein 2, mitochondrial</fullName>
        <ecNumber evidence="2">7.1.1.2</ecNumber>
    </recommendedName>
    <alternativeName>
        <fullName>NADH-ubiquinone oxidoreductase 24 kDa subunit</fullName>
    </alternativeName>
</protein>
<evidence type="ECO:0000250" key="1">
    <source>
        <dbReference type="UniProtKB" id="P04394"/>
    </source>
</evidence>
<evidence type="ECO:0000250" key="2">
    <source>
        <dbReference type="UniProtKB" id="P19404"/>
    </source>
</evidence>
<evidence type="ECO:0000250" key="3">
    <source>
        <dbReference type="UniProtKB" id="Q9D6J6"/>
    </source>
</evidence>
<evidence type="ECO:0000255" key="4"/>
<evidence type="ECO:0000256" key="5">
    <source>
        <dbReference type="SAM" id="MobiDB-lite"/>
    </source>
</evidence>
<evidence type="ECO:0000305" key="6"/>